<reference key="1">
    <citation type="journal article" date="2002" name="Proc. Natl. Acad. Sci. U.S.A.">
        <title>The genome sequence of the facultative intracellular pathogen Brucella melitensis.</title>
        <authorList>
            <person name="DelVecchio V.G."/>
            <person name="Kapatral V."/>
            <person name="Redkar R.J."/>
            <person name="Patra G."/>
            <person name="Mujer C."/>
            <person name="Los T."/>
            <person name="Ivanova N."/>
            <person name="Anderson I."/>
            <person name="Bhattacharyya A."/>
            <person name="Lykidis A."/>
            <person name="Reznik G."/>
            <person name="Jablonski L."/>
            <person name="Larsen N."/>
            <person name="D'Souza M."/>
            <person name="Bernal A."/>
            <person name="Mazur M."/>
            <person name="Goltsman E."/>
            <person name="Selkov E."/>
            <person name="Elzer P.H."/>
            <person name="Hagius S."/>
            <person name="O'Callaghan D."/>
            <person name="Letesson J.-J."/>
            <person name="Haselkorn R."/>
            <person name="Kyrpides N.C."/>
            <person name="Overbeek R."/>
        </authorList>
    </citation>
    <scope>NUCLEOTIDE SEQUENCE [LARGE SCALE GENOMIC DNA]</scope>
    <source>
        <strain>ATCC 23456 / CCUG 17765 / NCTC 10094 / 16M</strain>
    </source>
</reference>
<keyword id="KW-0574">Periplasm</keyword>
<keyword id="KW-0732">Signal</keyword>
<keyword id="KW-0762">Sugar transport</keyword>
<keyword id="KW-0813">Transport</keyword>
<sequence length="421" mass="45175">MHKLLKLAAMGTAACALLAGMAPVANAQEKQNVEVLHWWTSGGEASALEVLKKDLESKGISWTDMPVAGGGGTEAMTVLRARVTAGNAPTAVQMLGFDIRDWAEQGALGNLDTVASKEGWEKVIPAPLQEFAKYDGHWIAAPVNIHSTNWMWINKAALDKAGGKEPTNWDELIALLDNFKAQGITPIAHGGQPWQDATIFDAVVLSFGPDFYKKAFIDLDPEALGSDTMKQAFDRMSKLRTYVDDNFSGRDWNLASAMVIEGKAGVQFMGDWAKGEFLKAGKKPGEDFVCMRYPGTQGAVTFNSDMFAMFKVSEDKVPAQLEMASAIESPAFQSAFNVVKGSAPARTDVPDTAFDACGKKAIADVKEANSKGTLLGSMAHGYANPAAVKNAIYDVVTRQFNGQLSSEDAVKELVVAVEAAK</sequence>
<organism>
    <name type="scientific">Brucella melitensis biotype 1 (strain ATCC 23456 / CCUG 17765 / NCTC 10094 / 16M)</name>
    <dbReference type="NCBI Taxonomy" id="224914"/>
    <lineage>
        <taxon>Bacteria</taxon>
        <taxon>Pseudomonadati</taxon>
        <taxon>Pseudomonadota</taxon>
        <taxon>Alphaproteobacteria</taxon>
        <taxon>Hyphomicrobiales</taxon>
        <taxon>Brucellaceae</taxon>
        <taxon>Brucella/Ochrobactrum group</taxon>
        <taxon>Brucella</taxon>
    </lineage>
</organism>
<name>SP39_BRUME</name>
<dbReference type="EMBL" id="AE008918">
    <property type="protein sequence ID" value="AAL53832.1"/>
    <property type="status" value="ALT_INIT"/>
    <property type="molecule type" value="Genomic_DNA"/>
</dbReference>
<dbReference type="PIR" id="AE3583">
    <property type="entry name" value="AE3583"/>
</dbReference>
<dbReference type="RefSeq" id="WP_004681977.1">
    <property type="nucleotide sequence ID" value="NZ_GG703779.1"/>
</dbReference>
<dbReference type="SMR" id="Q8YCE2"/>
<dbReference type="GeneID" id="29595503"/>
<dbReference type="KEGG" id="bme:BMEII0590"/>
<dbReference type="KEGG" id="bmel:DK63_2655"/>
<dbReference type="PATRIC" id="fig|224914.52.peg.2783"/>
<dbReference type="eggNOG" id="COG1653">
    <property type="taxonomic scope" value="Bacteria"/>
</dbReference>
<dbReference type="PhylomeDB" id="Q8YCE2"/>
<dbReference type="Proteomes" id="UP000000419">
    <property type="component" value="Chromosome II"/>
</dbReference>
<dbReference type="GO" id="GO:0042597">
    <property type="term" value="C:periplasmic space"/>
    <property type="evidence" value="ECO:0007669"/>
    <property type="project" value="UniProtKB-SubCell"/>
</dbReference>
<dbReference type="Gene3D" id="3.40.190.10">
    <property type="entry name" value="Periplasmic binding protein-like II"/>
    <property type="match status" value="2"/>
</dbReference>
<dbReference type="InterPro" id="IPR050490">
    <property type="entry name" value="Bact_solute-bd_prot1"/>
</dbReference>
<dbReference type="InterPro" id="IPR006059">
    <property type="entry name" value="SBP"/>
</dbReference>
<dbReference type="PANTHER" id="PTHR43649">
    <property type="entry name" value="ARABINOSE-BINDING PROTEIN-RELATED"/>
    <property type="match status" value="1"/>
</dbReference>
<dbReference type="PANTHER" id="PTHR43649:SF28">
    <property type="entry name" value="BINDING PROTEIN COMPONENT OF ABC SUGAR TRANSPORTER-RELATED"/>
    <property type="match status" value="1"/>
</dbReference>
<dbReference type="Pfam" id="PF01547">
    <property type="entry name" value="SBP_bac_1"/>
    <property type="match status" value="1"/>
</dbReference>
<dbReference type="SUPFAM" id="SSF53850">
    <property type="entry name" value="Periplasmic binding protein-like II"/>
    <property type="match status" value="1"/>
</dbReference>
<accession>Q8YCE2</accession>
<protein>
    <recommendedName>
        <fullName>Probable sugar-binding periplasmic protein</fullName>
    </recommendedName>
</protein>
<comment type="function">
    <text evidence="2">Part of a binding-protein-dependent transport system for a sugar.</text>
</comment>
<comment type="subcellular location">
    <subcellularLocation>
        <location evidence="2">Periplasm</location>
    </subcellularLocation>
</comment>
<comment type="similarity">
    <text evidence="2">Belongs to the bacterial solute-binding protein 1 family.</text>
</comment>
<comment type="sequence caution" evidence="2">
    <conflict type="erroneous initiation">
        <sequence resource="EMBL-CDS" id="AAL53832"/>
    </conflict>
</comment>
<gene>
    <name type="ordered locus">BMEII0590</name>
</gene>
<proteinExistence type="inferred from homology"/>
<feature type="signal peptide" evidence="1">
    <location>
        <begin position="1"/>
        <end position="27"/>
    </location>
</feature>
<feature type="chain" id="PRO_0000031709" description="Probable sugar-binding periplasmic protein">
    <location>
        <begin position="28"/>
        <end position="421"/>
    </location>
</feature>
<evidence type="ECO:0000255" key="1"/>
<evidence type="ECO:0000305" key="2"/>